<name>ATPE_NITWN</name>
<organism>
    <name type="scientific">Nitrobacter winogradskyi (strain ATCC 25391 / DSM 10237 / CIP 104748 / NCIMB 11846 / Nb-255)</name>
    <dbReference type="NCBI Taxonomy" id="323098"/>
    <lineage>
        <taxon>Bacteria</taxon>
        <taxon>Pseudomonadati</taxon>
        <taxon>Pseudomonadota</taxon>
        <taxon>Alphaproteobacteria</taxon>
        <taxon>Hyphomicrobiales</taxon>
        <taxon>Nitrobacteraceae</taxon>
        <taxon>Nitrobacter</taxon>
    </lineage>
</organism>
<gene>
    <name evidence="1" type="primary">atpC</name>
    <name type="ordered locus">Nwi_0434</name>
</gene>
<dbReference type="EMBL" id="CP000115">
    <property type="protein sequence ID" value="ABA03701.1"/>
    <property type="molecule type" value="Genomic_DNA"/>
</dbReference>
<dbReference type="RefSeq" id="WP_011313765.1">
    <property type="nucleotide sequence ID" value="NC_007406.1"/>
</dbReference>
<dbReference type="SMR" id="Q3SVJ0"/>
<dbReference type="STRING" id="323098.Nwi_0434"/>
<dbReference type="KEGG" id="nwi:Nwi_0434"/>
<dbReference type="eggNOG" id="COG0355">
    <property type="taxonomic scope" value="Bacteria"/>
</dbReference>
<dbReference type="HOGENOM" id="CLU_084338_2_1_5"/>
<dbReference type="OrthoDB" id="9799969at2"/>
<dbReference type="Proteomes" id="UP000002531">
    <property type="component" value="Chromosome"/>
</dbReference>
<dbReference type="GO" id="GO:0005886">
    <property type="term" value="C:plasma membrane"/>
    <property type="evidence" value="ECO:0007669"/>
    <property type="project" value="UniProtKB-SubCell"/>
</dbReference>
<dbReference type="GO" id="GO:0045259">
    <property type="term" value="C:proton-transporting ATP synthase complex"/>
    <property type="evidence" value="ECO:0007669"/>
    <property type="project" value="UniProtKB-KW"/>
</dbReference>
<dbReference type="GO" id="GO:0005524">
    <property type="term" value="F:ATP binding"/>
    <property type="evidence" value="ECO:0007669"/>
    <property type="project" value="UniProtKB-UniRule"/>
</dbReference>
<dbReference type="GO" id="GO:0046933">
    <property type="term" value="F:proton-transporting ATP synthase activity, rotational mechanism"/>
    <property type="evidence" value="ECO:0007669"/>
    <property type="project" value="UniProtKB-UniRule"/>
</dbReference>
<dbReference type="CDD" id="cd12152">
    <property type="entry name" value="F1-ATPase_delta"/>
    <property type="match status" value="1"/>
</dbReference>
<dbReference type="Gene3D" id="2.60.15.10">
    <property type="entry name" value="F0F1 ATP synthase delta/epsilon subunit, N-terminal"/>
    <property type="match status" value="1"/>
</dbReference>
<dbReference type="HAMAP" id="MF_00530">
    <property type="entry name" value="ATP_synth_epsil_bac"/>
    <property type="match status" value="1"/>
</dbReference>
<dbReference type="InterPro" id="IPR001469">
    <property type="entry name" value="ATP_synth_F1_dsu/esu"/>
</dbReference>
<dbReference type="InterPro" id="IPR020546">
    <property type="entry name" value="ATP_synth_F1_dsu/esu_N"/>
</dbReference>
<dbReference type="InterPro" id="IPR036771">
    <property type="entry name" value="ATPsynth_dsu/esu_N"/>
</dbReference>
<dbReference type="NCBIfam" id="TIGR01216">
    <property type="entry name" value="ATP_synt_epsi"/>
    <property type="match status" value="1"/>
</dbReference>
<dbReference type="NCBIfam" id="NF001851">
    <property type="entry name" value="PRK00571.2-4"/>
    <property type="match status" value="1"/>
</dbReference>
<dbReference type="NCBIfam" id="NF009982">
    <property type="entry name" value="PRK13448.1"/>
    <property type="match status" value="1"/>
</dbReference>
<dbReference type="PANTHER" id="PTHR13822">
    <property type="entry name" value="ATP SYNTHASE DELTA/EPSILON CHAIN"/>
    <property type="match status" value="1"/>
</dbReference>
<dbReference type="PANTHER" id="PTHR13822:SF10">
    <property type="entry name" value="ATP SYNTHASE EPSILON CHAIN, CHLOROPLASTIC"/>
    <property type="match status" value="1"/>
</dbReference>
<dbReference type="Pfam" id="PF02823">
    <property type="entry name" value="ATP-synt_DE_N"/>
    <property type="match status" value="1"/>
</dbReference>
<dbReference type="SUPFAM" id="SSF51344">
    <property type="entry name" value="Epsilon subunit of F1F0-ATP synthase N-terminal domain"/>
    <property type="match status" value="1"/>
</dbReference>
<reference key="1">
    <citation type="journal article" date="2006" name="Appl. Environ. Microbiol.">
        <title>Genome sequence of the chemolithoautotrophic nitrite-oxidizing bacterium Nitrobacter winogradskyi Nb-255.</title>
        <authorList>
            <person name="Starkenburg S.R."/>
            <person name="Chain P.S.G."/>
            <person name="Sayavedra-Soto L.A."/>
            <person name="Hauser L."/>
            <person name="Land M.L."/>
            <person name="Larimer F.W."/>
            <person name="Malfatti S.A."/>
            <person name="Klotz M.G."/>
            <person name="Bottomley P.J."/>
            <person name="Arp D.J."/>
            <person name="Hickey W.J."/>
        </authorList>
    </citation>
    <scope>NUCLEOTIDE SEQUENCE [LARGE SCALE GENOMIC DNA]</scope>
    <source>
        <strain>ATCC 25391 / DSM 10237 / CIP 104748 / NCIMB 11846 / Nb-255</strain>
    </source>
</reference>
<comment type="function">
    <text evidence="1">Produces ATP from ADP in the presence of a proton gradient across the membrane.</text>
</comment>
<comment type="subunit">
    <text>F-type ATPases have 2 components, CF(1) - the catalytic core - and CF(0) - the membrane proton channel. CF(1) has five subunits: alpha(3), beta(3), gamma(1), delta(1), epsilon(1). CF(0) has three main subunits: a, b and c.</text>
</comment>
<comment type="subcellular location">
    <subcellularLocation>
        <location evidence="1">Cell inner membrane</location>
        <topology evidence="1">Peripheral membrane protein</topology>
    </subcellularLocation>
</comment>
<comment type="similarity">
    <text evidence="1">Belongs to the ATPase epsilon chain family.</text>
</comment>
<sequence>MATFHFDLVSPEKLAFSGEVDQVDIPGVEGDFGVLAGHAPVVAAIRPGMLTVTAGGTQQKIIVLGGLAEVSEKGLTVLADVATSIEELDRAQFADTIAGMEARLTDKEGSELDKAIERLDHFKSIQSQLNTTAMH</sequence>
<keyword id="KW-0066">ATP synthesis</keyword>
<keyword id="KW-0997">Cell inner membrane</keyword>
<keyword id="KW-1003">Cell membrane</keyword>
<keyword id="KW-0139">CF(1)</keyword>
<keyword id="KW-0375">Hydrogen ion transport</keyword>
<keyword id="KW-0406">Ion transport</keyword>
<keyword id="KW-0472">Membrane</keyword>
<keyword id="KW-1185">Reference proteome</keyword>
<keyword id="KW-0813">Transport</keyword>
<feature type="chain" id="PRO_0000265847" description="ATP synthase epsilon chain">
    <location>
        <begin position="1"/>
        <end position="135"/>
    </location>
</feature>
<proteinExistence type="inferred from homology"/>
<evidence type="ECO:0000255" key="1">
    <source>
        <dbReference type="HAMAP-Rule" id="MF_00530"/>
    </source>
</evidence>
<protein>
    <recommendedName>
        <fullName evidence="1">ATP synthase epsilon chain</fullName>
    </recommendedName>
    <alternativeName>
        <fullName evidence="1">ATP synthase F1 sector epsilon subunit</fullName>
    </alternativeName>
    <alternativeName>
        <fullName evidence="1">F-ATPase epsilon subunit</fullName>
    </alternativeName>
</protein>
<accession>Q3SVJ0</accession>